<accession>Q5HG19</accession>
<accession>Q798X6</accession>
<proteinExistence type="inferred from homology"/>
<evidence type="ECO:0000250" key="1"/>
<evidence type="ECO:0000255" key="2"/>
<evidence type="ECO:0000305" key="3"/>
<comment type="function">
    <text evidence="1">Accessory element involved in the expression of sarA and several virulence factors. Modulates SarA production and/or function in a strain-dependent manner. Affects the transcription of the accessory gene regulator (agr) and genes encoding virulence factors including alpha toxin (hla) and protein A (spa) (By similarity).</text>
</comment>
<comment type="subcellular location">
    <subcellularLocation>
        <location evidence="3">Cell membrane</location>
        <topology evidence="3">Multi-pass membrane protein</topology>
    </subcellularLocation>
</comment>
<organism>
    <name type="scientific">Staphylococcus aureus (strain COL)</name>
    <dbReference type="NCBI Taxonomy" id="93062"/>
    <lineage>
        <taxon>Bacteria</taxon>
        <taxon>Bacillati</taxon>
        <taxon>Bacillota</taxon>
        <taxon>Bacilli</taxon>
        <taxon>Bacillales</taxon>
        <taxon>Staphylococcaceae</taxon>
        <taxon>Staphylococcus</taxon>
    </lineage>
</organism>
<keyword id="KW-1003">Cell membrane</keyword>
<keyword id="KW-0472">Membrane</keyword>
<keyword id="KW-0812">Transmembrane</keyword>
<keyword id="KW-1133">Transmembrane helix</keyword>
<dbReference type="EMBL" id="Y18632">
    <property type="protein sequence ID" value="CAC80095.1"/>
    <property type="molecule type" value="Genomic_DNA"/>
</dbReference>
<dbReference type="EMBL" id="CP000046">
    <property type="protein sequence ID" value="AAW38181.1"/>
    <property type="molecule type" value="Genomic_DNA"/>
</dbReference>
<dbReference type="RefSeq" id="WP_000876201.1">
    <property type="nucleotide sequence ID" value="NZ_JBGOFO010000003.1"/>
</dbReference>
<dbReference type="SMR" id="Q5HG19"/>
<dbReference type="KEGG" id="sac:SACOL1436"/>
<dbReference type="HOGENOM" id="CLU_157294_0_0_9"/>
<dbReference type="Proteomes" id="UP000000530">
    <property type="component" value="Chromosome"/>
</dbReference>
<dbReference type="GO" id="GO:0005886">
    <property type="term" value="C:plasma membrane"/>
    <property type="evidence" value="ECO:0007669"/>
    <property type="project" value="UniProtKB-SubCell"/>
</dbReference>
<dbReference type="NCBIfam" id="NF038270">
    <property type="entry name" value="membran_MsaC"/>
    <property type="match status" value="1"/>
</dbReference>
<feature type="chain" id="PRO_0000253058" description="Protein msa">
    <location>
        <begin position="1"/>
        <end position="133"/>
    </location>
</feature>
<feature type="transmembrane region" description="Helical" evidence="2">
    <location>
        <begin position="3"/>
        <end position="23"/>
    </location>
</feature>
<feature type="transmembrane region" description="Helical" evidence="2">
    <location>
        <begin position="27"/>
        <end position="47"/>
    </location>
</feature>
<feature type="transmembrane region" description="Helical" evidence="2">
    <location>
        <begin position="55"/>
        <end position="75"/>
    </location>
</feature>
<feature type="transmembrane region" description="Helical" evidence="2">
    <location>
        <begin position="103"/>
        <end position="123"/>
    </location>
</feature>
<sequence>MKYLILSLVANLLVFGVLSAIGLNINILAAMMIVLVIPIMISGILFFKTNIDKTYIFFNIIFIDFYYYIYNVHLMTLPKFNNYIKAEMMELEDIDVLITSKDFGFDEILFYTLYLLLILIVLYYLKKQVKHKI</sequence>
<reference key="1">
    <citation type="journal article" date="1999" name="Microb. Drug Resist.">
        <title>Antibiotic resistance as a stress response: complete sequencing of a large number of chromosomal loci in Staphylococcus aureus strain COL that impact on the expression of resistance to methicillin.</title>
        <authorList>
            <person name="de Lencastre H."/>
            <person name="Wu S.-W."/>
            <person name="Pinho M.G."/>
            <person name="Ludovice A.M."/>
            <person name="Filipe S."/>
            <person name="Gardete S."/>
            <person name="Sobral R."/>
            <person name="Gill S.R."/>
            <person name="Chung M."/>
            <person name="Tomasz A."/>
        </authorList>
    </citation>
    <scope>NUCLEOTIDE SEQUENCE [GENOMIC DNA]</scope>
</reference>
<reference key="2">
    <citation type="journal article" date="2005" name="J. Bacteriol.">
        <title>Insights on evolution of virulence and resistance from the complete genome analysis of an early methicillin-resistant Staphylococcus aureus strain and a biofilm-producing methicillin-resistant Staphylococcus epidermidis strain.</title>
        <authorList>
            <person name="Gill S.R."/>
            <person name="Fouts D.E."/>
            <person name="Archer G.L."/>
            <person name="Mongodin E.F."/>
            <person name="DeBoy R.T."/>
            <person name="Ravel J."/>
            <person name="Paulsen I.T."/>
            <person name="Kolonay J.F."/>
            <person name="Brinkac L.M."/>
            <person name="Beanan M.J."/>
            <person name="Dodson R.J."/>
            <person name="Daugherty S.C."/>
            <person name="Madupu R."/>
            <person name="Angiuoli S.V."/>
            <person name="Durkin A.S."/>
            <person name="Haft D.H."/>
            <person name="Vamathevan J.J."/>
            <person name="Khouri H."/>
            <person name="Utterback T.R."/>
            <person name="Lee C."/>
            <person name="Dimitrov G."/>
            <person name="Jiang L."/>
            <person name="Qin H."/>
            <person name="Weidman J."/>
            <person name="Tran K."/>
            <person name="Kang K.H."/>
            <person name="Hance I.R."/>
            <person name="Nelson K.E."/>
            <person name="Fraser C.M."/>
        </authorList>
    </citation>
    <scope>NUCLEOTIDE SEQUENCE [LARGE SCALE GENOMIC DNA]</scope>
    <source>
        <strain>COL</strain>
    </source>
</reference>
<gene>
    <name type="primary">msa</name>
    <name type="ordered locus">SACOL1436</name>
</gene>
<protein>
    <recommendedName>
        <fullName>Protein msa</fullName>
    </recommendedName>
    <alternativeName>
        <fullName>Modulator of SarA</fullName>
    </alternativeName>
</protein>
<name>MSA_STAAC</name>